<dbReference type="EC" id="1.11.1.21" evidence="1"/>
<dbReference type="EMBL" id="CP000086">
    <property type="protein sequence ID" value="ABC36439.1"/>
    <property type="molecule type" value="Genomic_DNA"/>
</dbReference>
<dbReference type="RefSeq" id="WP_009889205.1">
    <property type="nucleotide sequence ID" value="NC_007651.1"/>
</dbReference>
<dbReference type="SMR" id="Q2SZ20"/>
<dbReference type="PeroxiBase" id="3663">
    <property type="entry name" value="BthCP01_E264"/>
</dbReference>
<dbReference type="GeneID" id="45121028"/>
<dbReference type="KEGG" id="bte:BTH_I1282"/>
<dbReference type="HOGENOM" id="CLU_025424_2_0_4"/>
<dbReference type="Proteomes" id="UP000001930">
    <property type="component" value="Chromosome I"/>
</dbReference>
<dbReference type="GO" id="GO:0005829">
    <property type="term" value="C:cytosol"/>
    <property type="evidence" value="ECO:0007669"/>
    <property type="project" value="TreeGrafter"/>
</dbReference>
<dbReference type="GO" id="GO:0004096">
    <property type="term" value="F:catalase activity"/>
    <property type="evidence" value="ECO:0007669"/>
    <property type="project" value="UniProtKB-UniRule"/>
</dbReference>
<dbReference type="GO" id="GO:0020037">
    <property type="term" value="F:heme binding"/>
    <property type="evidence" value="ECO:0007669"/>
    <property type="project" value="InterPro"/>
</dbReference>
<dbReference type="GO" id="GO:0046872">
    <property type="term" value="F:metal ion binding"/>
    <property type="evidence" value="ECO:0007669"/>
    <property type="project" value="UniProtKB-KW"/>
</dbReference>
<dbReference type="GO" id="GO:0070301">
    <property type="term" value="P:cellular response to hydrogen peroxide"/>
    <property type="evidence" value="ECO:0007669"/>
    <property type="project" value="TreeGrafter"/>
</dbReference>
<dbReference type="GO" id="GO:0042744">
    <property type="term" value="P:hydrogen peroxide catabolic process"/>
    <property type="evidence" value="ECO:0007669"/>
    <property type="project" value="UniProtKB-KW"/>
</dbReference>
<dbReference type="CDD" id="cd00649">
    <property type="entry name" value="catalase_peroxidase_1"/>
    <property type="match status" value="1"/>
</dbReference>
<dbReference type="CDD" id="cd08200">
    <property type="entry name" value="catalase_peroxidase_2"/>
    <property type="match status" value="1"/>
</dbReference>
<dbReference type="FunFam" id="1.10.420.10:FF:000002">
    <property type="entry name" value="Catalase-peroxidase"/>
    <property type="match status" value="1"/>
</dbReference>
<dbReference type="FunFam" id="1.10.420.10:FF:000004">
    <property type="entry name" value="Catalase-peroxidase"/>
    <property type="match status" value="1"/>
</dbReference>
<dbReference type="FunFam" id="1.10.520.10:FF:000002">
    <property type="entry name" value="Catalase-peroxidase"/>
    <property type="match status" value="1"/>
</dbReference>
<dbReference type="FunFam" id="1.10.520.10:FF:000004">
    <property type="entry name" value="Catalase-peroxidase"/>
    <property type="match status" value="1"/>
</dbReference>
<dbReference type="Gene3D" id="1.10.520.10">
    <property type="match status" value="2"/>
</dbReference>
<dbReference type="Gene3D" id="1.10.420.10">
    <property type="entry name" value="Peroxidase, domain 2"/>
    <property type="match status" value="2"/>
</dbReference>
<dbReference type="HAMAP" id="MF_01961">
    <property type="entry name" value="Catal_peroxid"/>
    <property type="match status" value="1"/>
</dbReference>
<dbReference type="InterPro" id="IPR000763">
    <property type="entry name" value="Catalase_peroxidase"/>
</dbReference>
<dbReference type="InterPro" id="IPR002016">
    <property type="entry name" value="Haem_peroxidase"/>
</dbReference>
<dbReference type="InterPro" id="IPR010255">
    <property type="entry name" value="Haem_peroxidase_sf"/>
</dbReference>
<dbReference type="InterPro" id="IPR019794">
    <property type="entry name" value="Peroxidases_AS"/>
</dbReference>
<dbReference type="InterPro" id="IPR019793">
    <property type="entry name" value="Peroxidases_heam-ligand_BS"/>
</dbReference>
<dbReference type="NCBIfam" id="TIGR00198">
    <property type="entry name" value="cat_per_HPI"/>
    <property type="match status" value="1"/>
</dbReference>
<dbReference type="NCBIfam" id="NF011635">
    <property type="entry name" value="PRK15061.1"/>
    <property type="match status" value="1"/>
</dbReference>
<dbReference type="PANTHER" id="PTHR30555:SF0">
    <property type="entry name" value="CATALASE-PEROXIDASE"/>
    <property type="match status" value="1"/>
</dbReference>
<dbReference type="PANTHER" id="PTHR30555">
    <property type="entry name" value="HYDROPEROXIDASE I, BIFUNCTIONAL CATALASE-PEROXIDASE"/>
    <property type="match status" value="1"/>
</dbReference>
<dbReference type="Pfam" id="PF00141">
    <property type="entry name" value="peroxidase"/>
    <property type="match status" value="2"/>
</dbReference>
<dbReference type="PRINTS" id="PR00460">
    <property type="entry name" value="BPEROXIDASE"/>
</dbReference>
<dbReference type="PRINTS" id="PR00458">
    <property type="entry name" value="PEROXIDASE"/>
</dbReference>
<dbReference type="SUPFAM" id="SSF48113">
    <property type="entry name" value="Heme-dependent peroxidases"/>
    <property type="match status" value="2"/>
</dbReference>
<dbReference type="PROSITE" id="PS00435">
    <property type="entry name" value="PEROXIDASE_1"/>
    <property type="match status" value="1"/>
</dbReference>
<dbReference type="PROSITE" id="PS00436">
    <property type="entry name" value="PEROXIDASE_2"/>
    <property type="match status" value="1"/>
</dbReference>
<dbReference type="PROSITE" id="PS50873">
    <property type="entry name" value="PEROXIDASE_4"/>
    <property type="match status" value="1"/>
</dbReference>
<reference key="1">
    <citation type="journal article" date="2005" name="BMC Genomics">
        <title>Bacterial genome adaptation to niches: divergence of the potential virulence genes in three Burkholderia species of different survival strategies.</title>
        <authorList>
            <person name="Kim H.S."/>
            <person name="Schell M.A."/>
            <person name="Yu Y."/>
            <person name="Ulrich R.L."/>
            <person name="Sarria S.H."/>
            <person name="Nierman W.C."/>
            <person name="DeShazer D."/>
        </authorList>
    </citation>
    <scope>NUCLEOTIDE SEQUENCE [LARGE SCALE GENOMIC DNA]</scope>
    <source>
        <strain>ATCC 700388 / DSM 13276 / CCUG 48851 / CIP 106301 / E264</strain>
    </source>
</reference>
<gene>
    <name evidence="1" type="primary">katG</name>
    <name type="ordered locus">BTH_I1282</name>
</gene>
<comment type="function">
    <text evidence="1">Bifunctional enzyme with both catalase and broad-spectrum peroxidase activity.</text>
</comment>
<comment type="catalytic activity">
    <reaction evidence="1">
        <text>H2O2 + AH2 = A + 2 H2O</text>
        <dbReference type="Rhea" id="RHEA:30275"/>
        <dbReference type="ChEBI" id="CHEBI:13193"/>
        <dbReference type="ChEBI" id="CHEBI:15377"/>
        <dbReference type="ChEBI" id="CHEBI:16240"/>
        <dbReference type="ChEBI" id="CHEBI:17499"/>
        <dbReference type="EC" id="1.11.1.21"/>
    </reaction>
</comment>
<comment type="catalytic activity">
    <reaction evidence="1">
        <text>2 H2O2 = O2 + 2 H2O</text>
        <dbReference type="Rhea" id="RHEA:20309"/>
        <dbReference type="ChEBI" id="CHEBI:15377"/>
        <dbReference type="ChEBI" id="CHEBI:15379"/>
        <dbReference type="ChEBI" id="CHEBI:16240"/>
        <dbReference type="EC" id="1.11.1.21"/>
    </reaction>
</comment>
<comment type="cofactor">
    <cofactor evidence="1">
        <name>heme b</name>
        <dbReference type="ChEBI" id="CHEBI:60344"/>
    </cofactor>
    <text evidence="1">Binds 1 heme b (iron(II)-protoporphyrin IX) group per dimer.</text>
</comment>
<comment type="subunit">
    <text evidence="1">Homodimer or homotetramer.</text>
</comment>
<comment type="PTM">
    <text evidence="1">Formation of the three residue Trp-Tyr-Met cross-link is important for the catalase, but not the peroxidase activity of the enzyme.</text>
</comment>
<comment type="similarity">
    <text evidence="1">Belongs to the peroxidase family. Peroxidase/catalase subfamily.</text>
</comment>
<sequence length="728" mass="79535">MSNEAKCPFHHAAGNGTSNRDWWPDQLDLSALHRHSSLSDPMDRDFNYAQAFEKLDLAAVKRDLHALMTTSQDWWPADFGHYGGLFIRMAWHSAGTYRTADGRGGAGEGQQRFAPLNSWPDNANLDKARRLLWPIKQKYGRSISWADLLILTGNVALESMGFKTFGFAGGRADTWEPEDVYWGSEKIWLELSGGPNSRYSGDRQLENPLAAVQMGLIYVNPEGPDGNPDPVAAARDIRDTFARMAMNDEETVALIAGGHTFGKTHGAGPASNVGPEPEAAGLEEQGLGWKSAYGTGKGADAITSGLEVTWTKTPTQWSNNFFENLFGYEWELTKSPAGAHQWVAKDADAVIPDAFDPSKKHRPTMLTTDLSLRFDPAYEKISRRFHEHPDEFADAFARAWFKLTHRDMGPRARYLGPEVPAEELLWQDPIPAVDHPLIDAADVAALKAQVLASGLSVSQLVSTAWAAASTFRGSDKRGGANGARIRLAPQKDWEANQPEQLATVLATLEAIRRTFNGAQSGGKRVSLADLIVLAGCAGVEQAAKNAGHAVTVPFAPGRMDASQEQTDVESMAVLEPLADGFRNYLKGKYRVPAEVLLVDKAQLLTLSAPEMTVLLGGLRVLGANAGQSRHGVFTARAQALTNDFFVNLLDMSTEWKPASADADVFEGRDRATGALKWTGTRVDLVFGSHSQLRALAEVYASADAQEKFVRDFVAVWNKVMNLDRFDLA</sequence>
<proteinExistence type="inferred from homology"/>
<keyword id="KW-0349">Heme</keyword>
<keyword id="KW-0376">Hydrogen peroxide</keyword>
<keyword id="KW-0408">Iron</keyword>
<keyword id="KW-0479">Metal-binding</keyword>
<keyword id="KW-0560">Oxidoreductase</keyword>
<keyword id="KW-0575">Peroxidase</keyword>
<name>KATG_BURTA</name>
<feature type="chain" id="PRO_0000354751" description="Catalase-peroxidase">
    <location>
        <begin position="1"/>
        <end position="728"/>
    </location>
</feature>
<feature type="active site" description="Proton acceptor" evidence="1">
    <location>
        <position position="92"/>
    </location>
</feature>
<feature type="binding site" description="axial binding residue" evidence="1">
    <location>
        <position position="259"/>
    </location>
    <ligand>
        <name>heme b</name>
        <dbReference type="ChEBI" id="CHEBI:60344"/>
    </ligand>
    <ligandPart>
        <name>Fe</name>
        <dbReference type="ChEBI" id="CHEBI:18248"/>
    </ligandPart>
</feature>
<feature type="site" description="Transition state stabilizer" evidence="1">
    <location>
        <position position="88"/>
    </location>
</feature>
<feature type="cross-link" description="Tryptophyl-tyrosyl-methioninium (Trp-Tyr) (with M-244)" evidence="1">
    <location>
        <begin position="91"/>
        <end position="218"/>
    </location>
</feature>
<feature type="cross-link" description="Tryptophyl-tyrosyl-methioninium (Tyr-Met) (with W-91)" evidence="1">
    <location>
        <begin position="218"/>
        <end position="244"/>
    </location>
</feature>
<accession>Q2SZ20</accession>
<evidence type="ECO:0000255" key="1">
    <source>
        <dbReference type="HAMAP-Rule" id="MF_01961"/>
    </source>
</evidence>
<protein>
    <recommendedName>
        <fullName evidence="1">Catalase-peroxidase</fullName>
        <shortName evidence="1">CP</shortName>
        <ecNumber evidence="1">1.11.1.21</ecNumber>
    </recommendedName>
    <alternativeName>
        <fullName evidence="1">Peroxidase/catalase</fullName>
    </alternativeName>
</protein>
<organism>
    <name type="scientific">Burkholderia thailandensis (strain ATCC 700388 / DSM 13276 / CCUG 48851 / CIP 106301 / E264)</name>
    <dbReference type="NCBI Taxonomy" id="271848"/>
    <lineage>
        <taxon>Bacteria</taxon>
        <taxon>Pseudomonadati</taxon>
        <taxon>Pseudomonadota</taxon>
        <taxon>Betaproteobacteria</taxon>
        <taxon>Burkholderiales</taxon>
        <taxon>Burkholderiaceae</taxon>
        <taxon>Burkholderia</taxon>
        <taxon>pseudomallei group</taxon>
    </lineage>
</organism>